<gene>
    <name evidence="1" type="primary">nfuA</name>
    <name type="ordered locus">MADE_1020025</name>
</gene>
<keyword id="KW-0004">4Fe-4S</keyword>
<keyword id="KW-0408">Iron</keyword>
<keyword id="KW-0411">Iron-sulfur</keyword>
<keyword id="KW-0479">Metal-binding</keyword>
<organism>
    <name type="scientific">Alteromonas mediterranea (strain DSM 17117 / CIP 110805 / LMG 28347 / Deep ecotype)</name>
    <dbReference type="NCBI Taxonomy" id="1774373"/>
    <lineage>
        <taxon>Bacteria</taxon>
        <taxon>Pseudomonadati</taxon>
        <taxon>Pseudomonadota</taxon>
        <taxon>Gammaproteobacteria</taxon>
        <taxon>Alteromonadales</taxon>
        <taxon>Alteromonadaceae</taxon>
        <taxon>Alteromonas/Salinimonas group</taxon>
        <taxon>Alteromonas</taxon>
    </lineage>
</organism>
<evidence type="ECO:0000255" key="1">
    <source>
        <dbReference type="HAMAP-Rule" id="MF_01637"/>
    </source>
</evidence>
<accession>B4S1U9</accession>
<accession>F2G528</accession>
<sequence>MITISEEAQAHFVKLLSKQESGTNIRVFVVNPGTSSAECGVSYCPPDAVEETDTRLTFNGFDAVVDEESAPYLDEAEIDYVTDQMGSQLTLKAPNAKARKVSDDAPLIERINYMIESEINPQLANHGGQVVLTELTDDGYAVLQFGGGCNGCSMVDVTLKDGIEKQMLEQFAGELNGVRDATEHQAGEHSYY</sequence>
<proteinExistence type="inferred from homology"/>
<name>NFUA_ALTMD</name>
<reference key="1">
    <citation type="journal article" date="2008" name="ISME J.">
        <title>Comparative genomics of two ecotypes of the marine planktonic copiotroph Alteromonas macleodii suggests alternative lifestyles associated with different kinds of particulate organic matter.</title>
        <authorList>
            <person name="Ivars-Martinez E."/>
            <person name="Martin-Cuadrado A.-B."/>
            <person name="D'Auria G."/>
            <person name="Mira A."/>
            <person name="Ferriera S."/>
            <person name="Johnson J."/>
            <person name="Friedman R."/>
            <person name="Rodriguez-Valera F."/>
        </authorList>
    </citation>
    <scope>NUCLEOTIDE SEQUENCE [LARGE SCALE GENOMIC DNA]</scope>
    <source>
        <strain>DSM 17117 / CIP 110805 / LMG 28347 / Deep ecotype</strain>
    </source>
</reference>
<dbReference type="EMBL" id="CP001103">
    <property type="protein sequence ID" value="AEB00128.1"/>
    <property type="molecule type" value="Genomic_DNA"/>
</dbReference>
<dbReference type="RefSeq" id="WP_012518748.1">
    <property type="nucleotide sequence ID" value="NC_011138.3"/>
</dbReference>
<dbReference type="SMR" id="B4S1U9"/>
<dbReference type="GeneID" id="56344218"/>
<dbReference type="KEGG" id="amc:MADE_1020025"/>
<dbReference type="HOGENOM" id="CLU_094569_0_0_6"/>
<dbReference type="Proteomes" id="UP000001870">
    <property type="component" value="Chromosome"/>
</dbReference>
<dbReference type="GO" id="GO:0051539">
    <property type="term" value="F:4 iron, 4 sulfur cluster binding"/>
    <property type="evidence" value="ECO:0007669"/>
    <property type="project" value="UniProtKB-UniRule"/>
</dbReference>
<dbReference type="GO" id="GO:0005506">
    <property type="term" value="F:iron ion binding"/>
    <property type="evidence" value="ECO:0007669"/>
    <property type="project" value="InterPro"/>
</dbReference>
<dbReference type="GO" id="GO:0016226">
    <property type="term" value="P:iron-sulfur cluster assembly"/>
    <property type="evidence" value="ECO:0007669"/>
    <property type="project" value="UniProtKB-UniRule"/>
</dbReference>
<dbReference type="GO" id="GO:0051604">
    <property type="term" value="P:protein maturation"/>
    <property type="evidence" value="ECO:0007669"/>
    <property type="project" value="UniProtKB-UniRule"/>
</dbReference>
<dbReference type="Gene3D" id="3.30.300.130">
    <property type="entry name" value="Fe-S cluster assembly (FSCA)"/>
    <property type="match status" value="1"/>
</dbReference>
<dbReference type="Gene3D" id="2.60.300.12">
    <property type="entry name" value="HesB-like domain"/>
    <property type="match status" value="1"/>
</dbReference>
<dbReference type="HAMAP" id="MF_01637">
    <property type="entry name" value="Fe_S_biogen_NfuA"/>
    <property type="match status" value="1"/>
</dbReference>
<dbReference type="InterPro" id="IPR017726">
    <property type="entry name" value="Fe/S_biogenesis_protein_NfuA"/>
</dbReference>
<dbReference type="InterPro" id="IPR000361">
    <property type="entry name" value="FeS_biogenesis"/>
</dbReference>
<dbReference type="InterPro" id="IPR034904">
    <property type="entry name" value="FSCA_dom_sf"/>
</dbReference>
<dbReference type="InterPro" id="IPR035903">
    <property type="entry name" value="HesB-like_dom_sf"/>
</dbReference>
<dbReference type="InterPro" id="IPR001075">
    <property type="entry name" value="NIF_FeS_clus_asmbl_NifU_C"/>
</dbReference>
<dbReference type="NCBIfam" id="NF008392">
    <property type="entry name" value="PRK11190.1"/>
    <property type="match status" value="1"/>
</dbReference>
<dbReference type="NCBIfam" id="TIGR03341">
    <property type="entry name" value="YhgI_GntY"/>
    <property type="match status" value="1"/>
</dbReference>
<dbReference type="PANTHER" id="PTHR11178:SF51">
    <property type="entry name" value="FE_S BIOGENESIS PROTEIN NFUA"/>
    <property type="match status" value="1"/>
</dbReference>
<dbReference type="PANTHER" id="PTHR11178">
    <property type="entry name" value="IRON-SULFUR CLUSTER SCAFFOLD PROTEIN NFU-RELATED"/>
    <property type="match status" value="1"/>
</dbReference>
<dbReference type="Pfam" id="PF01521">
    <property type="entry name" value="Fe-S_biosyn"/>
    <property type="match status" value="1"/>
</dbReference>
<dbReference type="Pfam" id="PF01106">
    <property type="entry name" value="NifU"/>
    <property type="match status" value="1"/>
</dbReference>
<dbReference type="SUPFAM" id="SSF117916">
    <property type="entry name" value="Fe-S cluster assembly (FSCA) domain-like"/>
    <property type="match status" value="1"/>
</dbReference>
<dbReference type="SUPFAM" id="SSF89360">
    <property type="entry name" value="HesB-like domain"/>
    <property type="match status" value="1"/>
</dbReference>
<protein>
    <recommendedName>
        <fullName evidence="1">Fe/S biogenesis protein NfuA</fullName>
    </recommendedName>
</protein>
<feature type="chain" id="PRO_1000186736" description="Fe/S biogenesis protein NfuA">
    <location>
        <begin position="1"/>
        <end position="192"/>
    </location>
</feature>
<feature type="binding site" evidence="1">
    <location>
        <position position="149"/>
    </location>
    <ligand>
        <name>[4Fe-4S] cluster</name>
        <dbReference type="ChEBI" id="CHEBI:49883"/>
    </ligand>
</feature>
<feature type="binding site" evidence="1">
    <location>
        <position position="152"/>
    </location>
    <ligand>
        <name>[4Fe-4S] cluster</name>
        <dbReference type="ChEBI" id="CHEBI:49883"/>
    </ligand>
</feature>
<comment type="function">
    <text evidence="1">Involved in iron-sulfur cluster biogenesis. Binds a 4Fe-4S cluster, can transfer this cluster to apoproteins, and thereby intervenes in the maturation of Fe/S proteins. Could also act as a scaffold/chaperone for damaged Fe/S proteins.</text>
</comment>
<comment type="cofactor">
    <cofactor evidence="1">
        <name>[4Fe-4S] cluster</name>
        <dbReference type="ChEBI" id="CHEBI:49883"/>
    </cofactor>
    <text evidence="1">Binds 1 [4Fe-4S] cluster per subunit. The cluster is presumably bound at the interface of two monomers.</text>
</comment>
<comment type="subunit">
    <text evidence="1">Homodimer.</text>
</comment>
<comment type="similarity">
    <text evidence="1">Belongs to the NfuA family.</text>
</comment>